<comment type="function">
    <text evidence="1">F(1)F(0) ATP synthase produces ATP from ADP in the presence of a proton or sodium gradient. F-type ATPases consist of two structural domains, F(1) containing the extramembraneous catalytic core and F(0) containing the membrane proton channel, linked together by a central stalk and a peripheral stalk. During catalysis, ATP synthesis in the catalytic domain of F(1) is coupled via a rotary mechanism of the central stalk subunits to proton translocation.</text>
</comment>
<comment type="function">
    <text evidence="1">Key component of the F(0) channel; it plays a direct role in translocation across the membrane. A homomeric c-ring of between 10-14 subunits forms the central stalk rotor element with the F(1) delta and epsilon subunits.</text>
</comment>
<comment type="subunit">
    <text evidence="1">F-type ATPases have 2 components, F(1) - the catalytic core - and F(0) - the membrane proton channel. F(1) has five subunits: alpha(3), beta(3), gamma(1), delta(1), epsilon(1). F(0) has three main subunits: a(1), b(2) and c(10-14). The alpha and beta chains form an alternating ring which encloses part of the gamma chain. F(1) is attached to F(0) by a central stalk formed by the gamma and epsilon chains, while a peripheral stalk is formed by the delta and b chains.</text>
</comment>
<comment type="subcellular location">
    <subcellularLocation>
        <location evidence="1">Cell membrane</location>
        <topology evidence="1">Multi-pass membrane protein</topology>
    </subcellularLocation>
</comment>
<comment type="similarity">
    <text evidence="1">Belongs to the ATPase C chain family.</text>
</comment>
<evidence type="ECO:0000255" key="1">
    <source>
        <dbReference type="HAMAP-Rule" id="MF_01396"/>
    </source>
</evidence>
<sequence length="109" mass="11061">MSSFIDITNVISSHVEANLPAVSAENVQSLANGAGIAYLGKYIGTGITMLAAGAVGLMQGFSTANAVQAVARNPEAQPKILSTMIVGLALAEAVAIYALIVSILIIFVA</sequence>
<reference key="1">
    <citation type="submission" date="2008-10" db="EMBL/GenBank/DDBJ databases">
        <title>Genome sequence of Ureaplasma urealyticum serovar 10 ATCC-33699.</title>
        <authorList>
            <person name="Shrivastava S."/>
            <person name="Methe B.A."/>
            <person name="Glass J."/>
            <person name="White K."/>
            <person name="Duffy L.B."/>
        </authorList>
    </citation>
    <scope>NUCLEOTIDE SEQUENCE [LARGE SCALE GENOMIC DNA]</scope>
    <source>
        <strain>ATCC 33699 / Western</strain>
    </source>
</reference>
<dbReference type="EMBL" id="CP001184">
    <property type="protein sequence ID" value="ACI60063.1"/>
    <property type="molecule type" value="Genomic_DNA"/>
</dbReference>
<dbReference type="RefSeq" id="WP_004026138.1">
    <property type="nucleotide sequence ID" value="NC_011374.1"/>
</dbReference>
<dbReference type="SMR" id="B5ZAW9"/>
<dbReference type="STRING" id="565575.UUR10_0152"/>
<dbReference type="KEGG" id="uue:UUR10_0152"/>
<dbReference type="eggNOG" id="COG0636">
    <property type="taxonomic scope" value="Bacteria"/>
</dbReference>
<dbReference type="HOGENOM" id="CLU_2182821_0_0_14"/>
<dbReference type="OrthoDB" id="3183855at2"/>
<dbReference type="Proteomes" id="UP000002018">
    <property type="component" value="Chromosome"/>
</dbReference>
<dbReference type="GO" id="GO:0005886">
    <property type="term" value="C:plasma membrane"/>
    <property type="evidence" value="ECO:0007669"/>
    <property type="project" value="UniProtKB-SubCell"/>
</dbReference>
<dbReference type="GO" id="GO:0045259">
    <property type="term" value="C:proton-transporting ATP synthase complex"/>
    <property type="evidence" value="ECO:0007669"/>
    <property type="project" value="UniProtKB-KW"/>
</dbReference>
<dbReference type="GO" id="GO:0033177">
    <property type="term" value="C:proton-transporting two-sector ATPase complex, proton-transporting domain"/>
    <property type="evidence" value="ECO:0007669"/>
    <property type="project" value="InterPro"/>
</dbReference>
<dbReference type="GO" id="GO:0008289">
    <property type="term" value="F:lipid binding"/>
    <property type="evidence" value="ECO:0007669"/>
    <property type="project" value="UniProtKB-KW"/>
</dbReference>
<dbReference type="GO" id="GO:0046933">
    <property type="term" value="F:proton-transporting ATP synthase activity, rotational mechanism"/>
    <property type="evidence" value="ECO:0007669"/>
    <property type="project" value="UniProtKB-UniRule"/>
</dbReference>
<dbReference type="CDD" id="cd18184">
    <property type="entry name" value="ATP-synt_Fo_c_NaATPase"/>
    <property type="match status" value="1"/>
</dbReference>
<dbReference type="Gene3D" id="1.20.20.10">
    <property type="entry name" value="F1F0 ATP synthase subunit C"/>
    <property type="match status" value="1"/>
</dbReference>
<dbReference type="HAMAP" id="MF_01396">
    <property type="entry name" value="ATP_synth_c_bact"/>
    <property type="match status" value="1"/>
</dbReference>
<dbReference type="InterPro" id="IPR000454">
    <property type="entry name" value="ATP_synth_F0_csu"/>
</dbReference>
<dbReference type="InterPro" id="IPR020537">
    <property type="entry name" value="ATP_synth_F0_csu_DDCD_BS"/>
</dbReference>
<dbReference type="InterPro" id="IPR038662">
    <property type="entry name" value="ATP_synth_F0_csu_sf"/>
</dbReference>
<dbReference type="InterPro" id="IPR002379">
    <property type="entry name" value="ATPase_proteolipid_c-like_dom"/>
</dbReference>
<dbReference type="InterPro" id="IPR035921">
    <property type="entry name" value="F/V-ATP_Csub_sf"/>
</dbReference>
<dbReference type="PANTHER" id="PTHR10031">
    <property type="entry name" value="ATP SYNTHASE LIPID-BINDING PROTEIN, MITOCHONDRIAL"/>
    <property type="match status" value="1"/>
</dbReference>
<dbReference type="PANTHER" id="PTHR10031:SF0">
    <property type="entry name" value="ATPASE PROTEIN 9"/>
    <property type="match status" value="1"/>
</dbReference>
<dbReference type="Pfam" id="PF00137">
    <property type="entry name" value="ATP-synt_C"/>
    <property type="match status" value="1"/>
</dbReference>
<dbReference type="PRINTS" id="PR00124">
    <property type="entry name" value="ATPASEC"/>
</dbReference>
<dbReference type="SUPFAM" id="SSF81333">
    <property type="entry name" value="F1F0 ATP synthase subunit C"/>
    <property type="match status" value="1"/>
</dbReference>
<dbReference type="PROSITE" id="PS00605">
    <property type="entry name" value="ATPASE_C"/>
    <property type="match status" value="1"/>
</dbReference>
<keyword id="KW-0066">ATP synthesis</keyword>
<keyword id="KW-1003">Cell membrane</keyword>
<keyword id="KW-0138">CF(0)</keyword>
<keyword id="KW-0375">Hydrogen ion transport</keyword>
<keyword id="KW-0406">Ion transport</keyword>
<keyword id="KW-0446">Lipid-binding</keyword>
<keyword id="KW-0472">Membrane</keyword>
<keyword id="KW-0812">Transmembrane</keyword>
<keyword id="KW-1133">Transmembrane helix</keyword>
<keyword id="KW-0813">Transport</keyword>
<name>ATPL_UREU1</name>
<gene>
    <name evidence="1" type="primary">atpE</name>
    <name type="ordered locus">UUR10_0152</name>
</gene>
<organism>
    <name type="scientific">Ureaplasma urealyticum serovar 10 (strain ATCC 33699 / Western)</name>
    <dbReference type="NCBI Taxonomy" id="565575"/>
    <lineage>
        <taxon>Bacteria</taxon>
        <taxon>Bacillati</taxon>
        <taxon>Mycoplasmatota</taxon>
        <taxon>Mycoplasmoidales</taxon>
        <taxon>Mycoplasmoidaceae</taxon>
        <taxon>Ureaplasma</taxon>
    </lineage>
</organism>
<accession>B5ZAW9</accession>
<feature type="chain" id="PRO_0000365939" description="ATP synthase subunit c">
    <location>
        <begin position="1"/>
        <end position="109"/>
    </location>
</feature>
<feature type="transmembrane region" description="Helical" evidence="1">
    <location>
        <begin position="42"/>
        <end position="62"/>
    </location>
</feature>
<feature type="transmembrane region" description="Helical" evidence="1">
    <location>
        <begin position="88"/>
        <end position="108"/>
    </location>
</feature>
<feature type="site" description="Reversibly protonated during proton transport" evidence="1">
    <location>
        <position position="92"/>
    </location>
</feature>
<proteinExistence type="inferred from homology"/>
<protein>
    <recommendedName>
        <fullName evidence="1">ATP synthase subunit c</fullName>
    </recommendedName>
    <alternativeName>
        <fullName evidence="1">ATP synthase F(0) sector subunit c</fullName>
    </alternativeName>
    <alternativeName>
        <fullName evidence="1">F-type ATPase subunit c</fullName>
        <shortName evidence="1">F-ATPase subunit c</shortName>
    </alternativeName>
    <alternativeName>
        <fullName evidence="1">Lipid-binding protein</fullName>
    </alternativeName>
</protein>